<organism>
    <name type="scientific">Pyricularia oryzae (strain 70-15 / ATCC MYA-4617 / FGSC 8958)</name>
    <name type="common">Rice blast fungus</name>
    <name type="synonym">Magnaporthe oryzae</name>
    <dbReference type="NCBI Taxonomy" id="242507"/>
    <lineage>
        <taxon>Eukaryota</taxon>
        <taxon>Fungi</taxon>
        <taxon>Dikarya</taxon>
        <taxon>Ascomycota</taxon>
        <taxon>Pezizomycotina</taxon>
        <taxon>Sordariomycetes</taxon>
        <taxon>Sordariomycetidae</taxon>
        <taxon>Magnaporthales</taxon>
        <taxon>Pyriculariaceae</taxon>
        <taxon>Pyricularia</taxon>
    </lineage>
</organism>
<evidence type="ECO:0000250" key="1">
    <source>
        <dbReference type="UniProtKB" id="Q9Y7D0"/>
    </source>
</evidence>
<evidence type="ECO:0000255" key="2"/>
<evidence type="ECO:0000269" key="3">
    <source>
    </source>
</evidence>
<evidence type="ECO:0000269" key="4">
    <source>
    </source>
</evidence>
<evidence type="ECO:0000269" key="5">
    <source>
    </source>
</evidence>
<evidence type="ECO:0000303" key="6">
    <source>
    </source>
</evidence>
<evidence type="ECO:0000303" key="7">
    <source>
    </source>
</evidence>
<evidence type="ECO:0000305" key="8"/>
<evidence type="ECO:0000305" key="9">
    <source>
    </source>
</evidence>
<evidence type="ECO:0000305" key="10">
    <source>
    </source>
</evidence>
<dbReference type="EC" id="1.-.-.-" evidence="4"/>
<dbReference type="EMBL" id="CM001232">
    <property type="protein sequence ID" value="EHA55861.1"/>
    <property type="molecule type" value="Genomic_DNA"/>
</dbReference>
<dbReference type="RefSeq" id="XP_003715668.1">
    <property type="nucleotide sequence ID" value="XM_003715620.1"/>
</dbReference>
<dbReference type="SMR" id="G4MVZ3"/>
<dbReference type="STRING" id="242507.G4MVZ3"/>
<dbReference type="EnsemblFungi" id="MGG_08391T0">
    <property type="protein sequence ID" value="MGG_08391T0"/>
    <property type="gene ID" value="MGG_08391"/>
</dbReference>
<dbReference type="GeneID" id="2678520"/>
<dbReference type="KEGG" id="mgr:MGG_08391"/>
<dbReference type="VEuPathDB" id="FungiDB:MGG_08391"/>
<dbReference type="eggNOG" id="KOG1198">
    <property type="taxonomic scope" value="Eukaryota"/>
</dbReference>
<dbReference type="HOGENOM" id="CLU_026673_16_1_1"/>
<dbReference type="InParanoid" id="G4MVZ3"/>
<dbReference type="OMA" id="DFKMPLR"/>
<dbReference type="OrthoDB" id="48317at2759"/>
<dbReference type="Proteomes" id="UP000009058">
    <property type="component" value="Chromosome 2"/>
</dbReference>
<dbReference type="GO" id="GO:0000166">
    <property type="term" value="F:nucleotide binding"/>
    <property type="evidence" value="ECO:0007669"/>
    <property type="project" value="UniProtKB-KW"/>
</dbReference>
<dbReference type="GO" id="GO:0016651">
    <property type="term" value="F:oxidoreductase activity, acting on NAD(P)H"/>
    <property type="evidence" value="ECO:0007669"/>
    <property type="project" value="InterPro"/>
</dbReference>
<dbReference type="CDD" id="cd08249">
    <property type="entry name" value="enoyl_reductase_like"/>
    <property type="match status" value="1"/>
</dbReference>
<dbReference type="Gene3D" id="3.90.180.10">
    <property type="entry name" value="Medium-chain alcohol dehydrogenases, catalytic domain"/>
    <property type="match status" value="1"/>
</dbReference>
<dbReference type="Gene3D" id="3.40.50.720">
    <property type="entry name" value="NAD(P)-binding Rossmann-like Domain"/>
    <property type="match status" value="1"/>
</dbReference>
<dbReference type="InterPro" id="IPR013149">
    <property type="entry name" value="ADH-like_C"/>
</dbReference>
<dbReference type="InterPro" id="IPR013154">
    <property type="entry name" value="ADH-like_N"/>
</dbReference>
<dbReference type="InterPro" id="IPR011032">
    <property type="entry name" value="GroES-like_sf"/>
</dbReference>
<dbReference type="InterPro" id="IPR036291">
    <property type="entry name" value="NAD(P)-bd_dom_sf"/>
</dbReference>
<dbReference type="InterPro" id="IPR020843">
    <property type="entry name" value="PKS_ER"/>
</dbReference>
<dbReference type="InterPro" id="IPR047122">
    <property type="entry name" value="Trans-enoyl_RdTase-like"/>
</dbReference>
<dbReference type="PANTHER" id="PTHR45348">
    <property type="entry name" value="HYPOTHETICAL OXIDOREDUCTASE (EUROFUNG)"/>
    <property type="match status" value="1"/>
</dbReference>
<dbReference type="PANTHER" id="PTHR45348:SF1">
    <property type="entry name" value="TRANS-ENOYL REDUCTASE STHE"/>
    <property type="match status" value="1"/>
</dbReference>
<dbReference type="Pfam" id="PF08240">
    <property type="entry name" value="ADH_N"/>
    <property type="match status" value="1"/>
</dbReference>
<dbReference type="Pfam" id="PF00107">
    <property type="entry name" value="ADH_zinc_N"/>
    <property type="match status" value="1"/>
</dbReference>
<dbReference type="SMART" id="SM00829">
    <property type="entry name" value="PKS_ER"/>
    <property type="match status" value="1"/>
</dbReference>
<dbReference type="SUPFAM" id="SSF50129">
    <property type="entry name" value="GroES-like"/>
    <property type="match status" value="1"/>
</dbReference>
<dbReference type="SUPFAM" id="SSF51735">
    <property type="entry name" value="NAD(P)-binding Rossmann-fold domains"/>
    <property type="match status" value="1"/>
</dbReference>
<reference key="1">
    <citation type="journal article" date="2005" name="Nature">
        <title>The genome sequence of the rice blast fungus Magnaporthe grisea.</title>
        <authorList>
            <person name="Dean R.A."/>
            <person name="Talbot N.J."/>
            <person name="Ebbole D.J."/>
            <person name="Farman M.L."/>
            <person name="Mitchell T.K."/>
            <person name="Orbach M.J."/>
            <person name="Thon M.R."/>
            <person name="Kulkarni R."/>
            <person name="Xu J.-R."/>
            <person name="Pan H."/>
            <person name="Read N.D."/>
            <person name="Lee Y.-H."/>
            <person name="Carbone I."/>
            <person name="Brown D."/>
            <person name="Oh Y.Y."/>
            <person name="Donofrio N."/>
            <person name="Jeong J.S."/>
            <person name="Soanes D.M."/>
            <person name="Djonovic S."/>
            <person name="Kolomiets E."/>
            <person name="Rehmeyer C."/>
            <person name="Li W."/>
            <person name="Harding M."/>
            <person name="Kim S."/>
            <person name="Lebrun M.-H."/>
            <person name="Bohnert H."/>
            <person name="Coughlan S."/>
            <person name="Butler J."/>
            <person name="Calvo S.E."/>
            <person name="Ma L.-J."/>
            <person name="Nicol R."/>
            <person name="Purcell S."/>
            <person name="Nusbaum C."/>
            <person name="Galagan J.E."/>
            <person name="Birren B.W."/>
        </authorList>
    </citation>
    <scope>NUCLEOTIDE SEQUENCE [LARGE SCALE GENOMIC DNA]</scope>
    <source>
        <strain>70-15 / ATCC MYA-4617 / FGSC 8958</strain>
    </source>
</reference>
<reference key="2">
    <citation type="journal article" date="2008" name="New Phytol.">
        <title>Magnaporthe grisea avirulence gene ACE1 belongs to an infection-specific gene cluster involved in secondary metabolism.</title>
        <authorList>
            <person name="Collemare J."/>
            <person name="Pianfetti M."/>
            <person name="Houlle A.E."/>
            <person name="Morin D."/>
            <person name="Camborde L."/>
            <person name="Gagey M.J."/>
            <person name="Barbisan C."/>
            <person name="Fudal I."/>
            <person name="Lebrun M.H."/>
            <person name="Boehnert H.U."/>
        </authorList>
    </citation>
    <scope>FUNCTION</scope>
    <scope>INDUCTION</scope>
    <scope>PATHWAY</scope>
</reference>
<reference key="3">
    <citation type="journal article" date="2015" name="Chem. Sci.">
        <title>Heterologous expression of the avirulence gene ACE1 from the fungal rice pathogen Magnaporthe oryzae.</title>
        <authorList>
            <person name="Song Z."/>
            <person name="Bakeer W."/>
            <person name="Marshall J.W."/>
            <person name="Yakasai A.A."/>
            <person name="Khalid R.M."/>
            <person name="Collemare J."/>
            <person name="Skellam E."/>
            <person name="Tharreau D."/>
            <person name="Lebrun M.H."/>
            <person name="Lazarus C.M."/>
            <person name="Bailey A.M."/>
            <person name="Simpson T.J."/>
            <person name="Cox R.J."/>
        </authorList>
    </citation>
    <scope>FUNCTION</scope>
    <scope>CATALYTIC ACTIVITY</scope>
    <scope>PATHWAY</scope>
</reference>
<reference key="4">
    <citation type="journal article" date="2019" name="Org. Lett.">
        <title>Investigating the function of cryptic cytochalasan cytochrome P450 monooxygenases using combinatorial biosynthesis.</title>
        <authorList>
            <person name="Wang C."/>
            <person name="Becker K."/>
            <person name="Pfuetze S."/>
            <person name="Kuhnert E."/>
            <person name="Stadler M."/>
            <person name="Cox R.J."/>
            <person name="Skellam E."/>
        </authorList>
    </citation>
    <scope>FUNCTION</scope>
</reference>
<name>RAP1_PYRO7</name>
<accession>G4MVZ3</accession>
<comment type="function">
    <text evidence="3 4 5 9 10">Trans-enoyl reductase; part of the gene cluster that mediates the biosynthesis of a tyrosine-derived cytochalasan acting as a fungal signal recognized by resistant rice plants and leads to avirulence in Pi33 resistant rice cultivars (PubMed:18433432, PubMed:29142718). The first step in the pathway is catalyzed by the hybrid PKS-NRPS ACE1, assisted by the enoyl reductase RAP1, that are responsible for fusion of the tyrosine precursor and the polyketide backbone (PubMed:29142718). The polyketide synthase module (PKS) of ACE1 is responsible for the synthesis of the polyketide backbone and the downstream nonribosomal peptide synthetase (NRPS) amidates the carboxyl end of the polyketide with the tyrosine precursor (PubMed:29142718). Because ACE1 lacks a designated enoylreductase (ER) domain, the required activity is provided the enoyl reductase RAP1 (PubMed:29142718). Reduction by the hydrolyase ORFZ, followed by dehydration and intra-molecular Diels-Alder cyclization by the Diels-Alderase ORF3 then yield the required isoindolone-fused macrocycle (Probable). A number of oxidative steps catalyzed by the tailoring enzymes identified within the cluster, including cytochrome P450 monooxygenases CYP1 to CYP4, the FAD-linked oxidoreductase OXR2 and the short-chain dehydrogenase/reductase OXR1, are further required to afford the final cytochalasans that confer avirulence and which have still to be identified (Probable). The monooxygenase CYP1 has been shown to be a site-selective C-18 hydroxylase whereas the function of CYP3 is the site-selective epoxidation of the C-6/C-7 olefin that is present in some intermediate compounds (PubMed:31644300). Finally, SYN2 and RAP2 are not required for avirulence in Pi33 resistant rice cultivars (PubMed:18433432).</text>
</comment>
<comment type="pathway">
    <text evidence="4">Secondary metabolite biosynthesis.</text>
</comment>
<comment type="subunit">
    <text evidence="1">Monomer.</text>
</comment>
<comment type="induction">
    <text evidence="3">Expressed exclusively during fungal penetration of host leaves, the time point at which plant defense reactions are triggered.</text>
</comment>
<comment type="similarity">
    <text evidence="8">Belongs to the zinc-containing alcohol dehydrogenase family.</text>
</comment>
<protein>
    <recommendedName>
        <fullName evidence="6">Trans-enoyl reductase RAP1</fullName>
        <ecNumber evidence="4">1.-.-.-</ecNumber>
    </recommendedName>
    <alternativeName>
        <fullName evidence="7">ACE1 cytochalasan biosynthesis cluster protein RAP1</fullName>
    </alternativeName>
</protein>
<sequence length="359" mass="39260">MAPFIPSSHTAIIQHDDAGGVKITPGLPLPVLEPGQVLVKTAAVALNPCDFKMPQRFSQAGTYNGCDYAGTVVQLTEEVEKNGLLKVGDRIFAACVGNNPHDKDSGSFAEYLKGTAKFCWKIPDWMSFEEAAGLSGTCIATACMSLFQSLKLPGTFEEPATKPLDVLIWGGASSVGTTMIQMVKLLGHRAITTCSPKNFELVKSYGADAVFDYRSPTCAADIKKLTRNSLKYVVDPFSDLRTMALADEAMGRSGGKYVALESYQDTHDKKSKLIERELIMGQMILGRAIKLPGDYGKPENPEMGRWGVECYKSVQRLVDDRKLRPHPLRILDGGLEAILDGLEMLKRREVAAEKIVVRL</sequence>
<keyword id="KW-0521">NADP</keyword>
<keyword id="KW-0547">Nucleotide-binding</keyword>
<keyword id="KW-0560">Oxidoreductase</keyword>
<keyword id="KW-1185">Reference proteome</keyword>
<proteinExistence type="evidence at protein level"/>
<feature type="chain" id="PRO_0000449429" description="Trans-enoyl reductase RAP1">
    <location>
        <begin position="1"/>
        <end position="359"/>
    </location>
</feature>
<feature type="binding site" evidence="1">
    <location>
        <begin position="49"/>
        <end position="52"/>
    </location>
    <ligand>
        <name>NADP(+)</name>
        <dbReference type="ChEBI" id="CHEBI:58349"/>
    </ligand>
</feature>
<feature type="binding site" evidence="2">
    <location>
        <begin position="137"/>
        <end position="144"/>
    </location>
    <ligand>
        <name>substrate</name>
    </ligand>
</feature>
<feature type="binding site" evidence="1">
    <location>
        <begin position="195"/>
        <end position="198"/>
    </location>
    <ligand>
        <name>NADP(+)</name>
        <dbReference type="ChEBI" id="CHEBI:58349"/>
    </ligand>
</feature>
<feature type="binding site" evidence="1">
    <location>
        <position position="213"/>
    </location>
    <ligand>
        <name>NADP(+)</name>
        <dbReference type="ChEBI" id="CHEBI:58349"/>
    </ligand>
</feature>
<feature type="binding site" evidence="1">
    <location>
        <begin position="260"/>
        <end position="261"/>
    </location>
    <ligand>
        <name>NADP(+)</name>
        <dbReference type="ChEBI" id="CHEBI:58349"/>
    </ligand>
</feature>
<feature type="binding site" evidence="2">
    <location>
        <begin position="281"/>
        <end position="285"/>
    </location>
    <ligand>
        <name>substrate</name>
    </ligand>
</feature>
<feature type="binding site" evidence="1">
    <location>
        <begin position="350"/>
        <end position="351"/>
    </location>
    <ligand>
        <name>NADP(+)</name>
        <dbReference type="ChEBI" id="CHEBI:58349"/>
    </ligand>
</feature>
<gene>
    <name evidence="6" type="primary">RAP1</name>
    <name type="ORF">MGG_08391</name>
</gene>